<proteinExistence type="inferred from homology"/>
<feature type="chain" id="PRO_0000176955" description="Transcription elongation factor GreB">
    <location>
        <begin position="1"/>
        <end position="162"/>
    </location>
</feature>
<feature type="coiled-coil region" evidence="1">
    <location>
        <begin position="52"/>
        <end position="73"/>
    </location>
</feature>
<comment type="function">
    <text evidence="1">Necessary for efficient RNA polymerase transcription elongation past template-encoded arresting sites. The arresting sites in DNA have the property of trapping a certain fraction of elongating RNA polymerases that pass through, resulting in locked ternary complexes. Cleavage of the nascent transcript by cleavage factors such as GreA or GreB allows the resumption of elongation from the new 3'terminus. GreB releases sequences of up to 9 nucleotides in length.</text>
</comment>
<comment type="similarity">
    <text evidence="1">Belongs to the GreA/GreB family. GreB subfamily.</text>
</comment>
<organism>
    <name type="scientific">Pseudomonas putida (strain ATCC 47054 / DSM 6125 / CFBP 8728 / NCIMB 11950 / KT2440)</name>
    <dbReference type="NCBI Taxonomy" id="160488"/>
    <lineage>
        <taxon>Bacteria</taxon>
        <taxon>Pseudomonadati</taxon>
        <taxon>Pseudomonadota</taxon>
        <taxon>Gammaproteobacteria</taxon>
        <taxon>Pseudomonadales</taxon>
        <taxon>Pseudomonadaceae</taxon>
        <taxon>Pseudomonas</taxon>
    </lineage>
</organism>
<name>GREB_PSEPK</name>
<accession>Q88KH5</accession>
<keyword id="KW-0175">Coiled coil</keyword>
<keyword id="KW-0238">DNA-binding</keyword>
<keyword id="KW-1185">Reference proteome</keyword>
<keyword id="KW-0804">Transcription</keyword>
<keyword id="KW-0805">Transcription regulation</keyword>
<dbReference type="EMBL" id="AE015451">
    <property type="protein sequence ID" value="AAN67928.1"/>
    <property type="molecule type" value="Genomic_DNA"/>
</dbReference>
<dbReference type="RefSeq" id="NP_744464.1">
    <property type="nucleotide sequence ID" value="NC_002947.4"/>
</dbReference>
<dbReference type="RefSeq" id="WP_010953283.1">
    <property type="nucleotide sequence ID" value="NZ_CP169744.1"/>
</dbReference>
<dbReference type="SMR" id="Q88KH5"/>
<dbReference type="STRING" id="160488.PP_2315"/>
<dbReference type="PaxDb" id="160488-PP_2315"/>
<dbReference type="GeneID" id="83681169"/>
<dbReference type="KEGG" id="ppu:PP_2315"/>
<dbReference type="PATRIC" id="fig|160488.4.peg.2452"/>
<dbReference type="eggNOG" id="COG0782">
    <property type="taxonomic scope" value="Bacteria"/>
</dbReference>
<dbReference type="HOGENOM" id="CLU_101379_3_0_6"/>
<dbReference type="OrthoDB" id="5511940at2"/>
<dbReference type="PhylomeDB" id="Q88KH5"/>
<dbReference type="BioCyc" id="PPUT160488:G1G01-2476-MONOMER"/>
<dbReference type="Proteomes" id="UP000000556">
    <property type="component" value="Chromosome"/>
</dbReference>
<dbReference type="GO" id="GO:0003677">
    <property type="term" value="F:DNA binding"/>
    <property type="evidence" value="ECO:0007669"/>
    <property type="project" value="UniProtKB-UniRule"/>
</dbReference>
<dbReference type="GO" id="GO:0070063">
    <property type="term" value="F:RNA polymerase binding"/>
    <property type="evidence" value="ECO:0007669"/>
    <property type="project" value="InterPro"/>
</dbReference>
<dbReference type="GO" id="GO:0006354">
    <property type="term" value="P:DNA-templated transcription elongation"/>
    <property type="evidence" value="ECO:0007669"/>
    <property type="project" value="TreeGrafter"/>
</dbReference>
<dbReference type="GO" id="GO:0032784">
    <property type="term" value="P:regulation of DNA-templated transcription elongation"/>
    <property type="evidence" value="ECO:0007669"/>
    <property type="project" value="UniProtKB-UniRule"/>
</dbReference>
<dbReference type="FunFam" id="1.10.287.180:FF:000001">
    <property type="entry name" value="Transcription elongation factor GreA"/>
    <property type="match status" value="1"/>
</dbReference>
<dbReference type="FunFam" id="3.10.50.30:FF:000001">
    <property type="entry name" value="Transcription elongation factor GreA"/>
    <property type="match status" value="1"/>
</dbReference>
<dbReference type="Gene3D" id="3.10.50.30">
    <property type="entry name" value="Transcription elongation factor, GreA/GreB, C-terminal domain"/>
    <property type="match status" value="1"/>
</dbReference>
<dbReference type="Gene3D" id="1.10.287.180">
    <property type="entry name" value="Transcription elongation factor, GreA/GreB, N-terminal domain"/>
    <property type="match status" value="1"/>
</dbReference>
<dbReference type="HAMAP" id="MF_00105">
    <property type="entry name" value="GreA_GreB"/>
    <property type="match status" value="1"/>
</dbReference>
<dbReference type="HAMAP" id="MF_00930">
    <property type="entry name" value="GreB"/>
    <property type="match status" value="1"/>
</dbReference>
<dbReference type="InterPro" id="IPR036953">
    <property type="entry name" value="GreA/GreB_C_sf"/>
</dbReference>
<dbReference type="InterPro" id="IPR018151">
    <property type="entry name" value="TF_GreA/GreB_CS"/>
</dbReference>
<dbReference type="InterPro" id="IPR028624">
    <property type="entry name" value="Tscrpt_elong_fac_GreA/B"/>
</dbReference>
<dbReference type="InterPro" id="IPR001437">
    <property type="entry name" value="Tscrpt_elong_fac_GreA/B_C"/>
</dbReference>
<dbReference type="InterPro" id="IPR023459">
    <property type="entry name" value="Tscrpt_elong_fac_GreA/B_fam"/>
</dbReference>
<dbReference type="InterPro" id="IPR022691">
    <property type="entry name" value="Tscrpt_elong_fac_GreA/B_N"/>
</dbReference>
<dbReference type="InterPro" id="IPR036805">
    <property type="entry name" value="Tscrpt_elong_fac_GreA/B_N_sf"/>
</dbReference>
<dbReference type="InterPro" id="IPR006358">
    <property type="entry name" value="Tscrpt_elong_fac_GreB"/>
</dbReference>
<dbReference type="NCBIfam" id="TIGR01461">
    <property type="entry name" value="greB"/>
    <property type="match status" value="1"/>
</dbReference>
<dbReference type="NCBIfam" id="NF002506">
    <property type="entry name" value="PRK01885.1"/>
    <property type="match status" value="1"/>
</dbReference>
<dbReference type="PANTHER" id="PTHR30437">
    <property type="entry name" value="TRANSCRIPTION ELONGATION FACTOR GREA"/>
    <property type="match status" value="1"/>
</dbReference>
<dbReference type="PANTHER" id="PTHR30437:SF6">
    <property type="entry name" value="TRANSCRIPTION ELONGATION FACTOR GREB"/>
    <property type="match status" value="1"/>
</dbReference>
<dbReference type="Pfam" id="PF01272">
    <property type="entry name" value="GreA_GreB"/>
    <property type="match status" value="1"/>
</dbReference>
<dbReference type="Pfam" id="PF03449">
    <property type="entry name" value="GreA_GreB_N"/>
    <property type="match status" value="1"/>
</dbReference>
<dbReference type="PIRSF" id="PIRSF006092">
    <property type="entry name" value="GreA_GreB"/>
    <property type="match status" value="1"/>
</dbReference>
<dbReference type="SUPFAM" id="SSF54534">
    <property type="entry name" value="FKBP-like"/>
    <property type="match status" value="1"/>
</dbReference>
<dbReference type="SUPFAM" id="SSF46557">
    <property type="entry name" value="GreA transcript cleavage protein, N-terminal domain"/>
    <property type="match status" value="1"/>
</dbReference>
<dbReference type="PROSITE" id="PS00829">
    <property type="entry name" value="GREAB_1"/>
    <property type="match status" value="1"/>
</dbReference>
<dbReference type="PROSITE" id="PS00830">
    <property type="entry name" value="GREAB_2"/>
    <property type="match status" value="1"/>
</dbReference>
<gene>
    <name evidence="1" type="primary">greB</name>
    <name type="ordered locus">PP_2315</name>
</gene>
<protein>
    <recommendedName>
        <fullName evidence="1">Transcription elongation factor GreB</fullName>
    </recommendedName>
    <alternativeName>
        <fullName evidence="1">Transcript cleavage factor GreB</fullName>
    </alternativeName>
</protein>
<evidence type="ECO:0000255" key="1">
    <source>
        <dbReference type="HAMAP-Rule" id="MF_00930"/>
    </source>
</evidence>
<sequence>MSTNIITTEGHEALKKELDHLWRVYRPEITQKVAWAASLGDRSENADYQYNKKLLREIDRRVRYLRKRLEDVKVVAYSPEQEGKVFFGAWVEIENDEGETMKFRIVGYDEIYGRNDYISIDSPMARALLKKEEGDEVVVHTPTGEATWYVSSIRYGQGVSTD</sequence>
<reference key="1">
    <citation type="journal article" date="2002" name="Environ. Microbiol.">
        <title>Complete genome sequence and comparative analysis of the metabolically versatile Pseudomonas putida KT2440.</title>
        <authorList>
            <person name="Nelson K.E."/>
            <person name="Weinel C."/>
            <person name="Paulsen I.T."/>
            <person name="Dodson R.J."/>
            <person name="Hilbert H."/>
            <person name="Martins dos Santos V.A.P."/>
            <person name="Fouts D.E."/>
            <person name="Gill S.R."/>
            <person name="Pop M."/>
            <person name="Holmes M."/>
            <person name="Brinkac L.M."/>
            <person name="Beanan M.J."/>
            <person name="DeBoy R.T."/>
            <person name="Daugherty S.C."/>
            <person name="Kolonay J.F."/>
            <person name="Madupu R."/>
            <person name="Nelson W.C."/>
            <person name="White O."/>
            <person name="Peterson J.D."/>
            <person name="Khouri H.M."/>
            <person name="Hance I."/>
            <person name="Chris Lee P."/>
            <person name="Holtzapple E.K."/>
            <person name="Scanlan D."/>
            <person name="Tran K."/>
            <person name="Moazzez A."/>
            <person name="Utterback T.R."/>
            <person name="Rizzo M."/>
            <person name="Lee K."/>
            <person name="Kosack D."/>
            <person name="Moestl D."/>
            <person name="Wedler H."/>
            <person name="Lauber J."/>
            <person name="Stjepandic D."/>
            <person name="Hoheisel J."/>
            <person name="Straetz M."/>
            <person name="Heim S."/>
            <person name="Kiewitz C."/>
            <person name="Eisen J.A."/>
            <person name="Timmis K.N."/>
            <person name="Duesterhoeft A."/>
            <person name="Tuemmler B."/>
            <person name="Fraser C.M."/>
        </authorList>
    </citation>
    <scope>NUCLEOTIDE SEQUENCE [LARGE SCALE GENOMIC DNA]</scope>
    <source>
        <strain>ATCC 47054 / DSM 6125 / CFBP 8728 / NCIMB 11950 / KT2440</strain>
    </source>
</reference>